<accession>B8DWS2</accession>
<name>ATPB_BIFA0</name>
<dbReference type="EC" id="7.1.2.2" evidence="1"/>
<dbReference type="EMBL" id="CP001213">
    <property type="protein sequence ID" value="ACL28923.1"/>
    <property type="molecule type" value="Genomic_DNA"/>
</dbReference>
<dbReference type="RefSeq" id="WP_004219179.1">
    <property type="nucleotide sequence ID" value="NC_011835.1"/>
</dbReference>
<dbReference type="SMR" id="B8DWS2"/>
<dbReference type="STRING" id="442563.BLA_0630"/>
<dbReference type="GeneID" id="29696475"/>
<dbReference type="KEGG" id="bla:BLA_0630"/>
<dbReference type="HOGENOM" id="CLU_022398_0_2_11"/>
<dbReference type="Proteomes" id="UP000002456">
    <property type="component" value="Chromosome"/>
</dbReference>
<dbReference type="GO" id="GO:0005886">
    <property type="term" value="C:plasma membrane"/>
    <property type="evidence" value="ECO:0007669"/>
    <property type="project" value="UniProtKB-SubCell"/>
</dbReference>
<dbReference type="GO" id="GO:0045259">
    <property type="term" value="C:proton-transporting ATP synthase complex"/>
    <property type="evidence" value="ECO:0007669"/>
    <property type="project" value="UniProtKB-KW"/>
</dbReference>
<dbReference type="GO" id="GO:0005524">
    <property type="term" value="F:ATP binding"/>
    <property type="evidence" value="ECO:0007669"/>
    <property type="project" value="UniProtKB-UniRule"/>
</dbReference>
<dbReference type="GO" id="GO:0016887">
    <property type="term" value="F:ATP hydrolysis activity"/>
    <property type="evidence" value="ECO:0007669"/>
    <property type="project" value="InterPro"/>
</dbReference>
<dbReference type="GO" id="GO:0046933">
    <property type="term" value="F:proton-transporting ATP synthase activity, rotational mechanism"/>
    <property type="evidence" value="ECO:0007669"/>
    <property type="project" value="UniProtKB-UniRule"/>
</dbReference>
<dbReference type="CDD" id="cd18110">
    <property type="entry name" value="ATP-synt_F1_beta_C"/>
    <property type="match status" value="1"/>
</dbReference>
<dbReference type="CDD" id="cd18115">
    <property type="entry name" value="ATP-synt_F1_beta_N"/>
    <property type="match status" value="1"/>
</dbReference>
<dbReference type="CDD" id="cd01133">
    <property type="entry name" value="F1-ATPase_beta_CD"/>
    <property type="match status" value="1"/>
</dbReference>
<dbReference type="FunFam" id="1.10.1140.10:FF:000005">
    <property type="entry name" value="ATP synthase subunit beta"/>
    <property type="match status" value="1"/>
</dbReference>
<dbReference type="FunFam" id="3.40.50.300:FF:000004">
    <property type="entry name" value="ATP synthase subunit beta"/>
    <property type="match status" value="1"/>
</dbReference>
<dbReference type="Gene3D" id="2.40.10.170">
    <property type="match status" value="1"/>
</dbReference>
<dbReference type="Gene3D" id="1.10.1140.10">
    <property type="entry name" value="Bovine Mitochondrial F1-atpase, Atp Synthase Beta Chain, Chain D, domain 3"/>
    <property type="match status" value="1"/>
</dbReference>
<dbReference type="Gene3D" id="3.40.50.300">
    <property type="entry name" value="P-loop containing nucleotide triphosphate hydrolases"/>
    <property type="match status" value="1"/>
</dbReference>
<dbReference type="HAMAP" id="MF_01347">
    <property type="entry name" value="ATP_synth_beta_bact"/>
    <property type="match status" value="1"/>
</dbReference>
<dbReference type="InterPro" id="IPR003593">
    <property type="entry name" value="AAA+_ATPase"/>
</dbReference>
<dbReference type="InterPro" id="IPR055190">
    <property type="entry name" value="ATP-synt_VA_C"/>
</dbReference>
<dbReference type="InterPro" id="IPR005722">
    <property type="entry name" value="ATP_synth_F1_bsu"/>
</dbReference>
<dbReference type="InterPro" id="IPR020003">
    <property type="entry name" value="ATPase_a/bsu_AS"/>
</dbReference>
<dbReference type="InterPro" id="IPR050053">
    <property type="entry name" value="ATPase_alpha/beta_chains"/>
</dbReference>
<dbReference type="InterPro" id="IPR004100">
    <property type="entry name" value="ATPase_F1/V1/A1_a/bsu_N"/>
</dbReference>
<dbReference type="InterPro" id="IPR036121">
    <property type="entry name" value="ATPase_F1/V1/A1_a/bsu_N_sf"/>
</dbReference>
<dbReference type="InterPro" id="IPR000194">
    <property type="entry name" value="ATPase_F1/V1/A1_a/bsu_nucl-bd"/>
</dbReference>
<dbReference type="InterPro" id="IPR024034">
    <property type="entry name" value="ATPase_F1/V1_b/a_C"/>
</dbReference>
<dbReference type="InterPro" id="IPR027417">
    <property type="entry name" value="P-loop_NTPase"/>
</dbReference>
<dbReference type="NCBIfam" id="TIGR01039">
    <property type="entry name" value="atpD"/>
    <property type="match status" value="1"/>
</dbReference>
<dbReference type="PANTHER" id="PTHR15184">
    <property type="entry name" value="ATP SYNTHASE"/>
    <property type="match status" value="1"/>
</dbReference>
<dbReference type="PANTHER" id="PTHR15184:SF71">
    <property type="entry name" value="ATP SYNTHASE SUBUNIT BETA, MITOCHONDRIAL"/>
    <property type="match status" value="1"/>
</dbReference>
<dbReference type="Pfam" id="PF00006">
    <property type="entry name" value="ATP-synt_ab"/>
    <property type="match status" value="1"/>
</dbReference>
<dbReference type="Pfam" id="PF02874">
    <property type="entry name" value="ATP-synt_ab_N"/>
    <property type="match status" value="1"/>
</dbReference>
<dbReference type="Pfam" id="PF22919">
    <property type="entry name" value="ATP-synt_VA_C"/>
    <property type="match status" value="1"/>
</dbReference>
<dbReference type="SMART" id="SM00382">
    <property type="entry name" value="AAA"/>
    <property type="match status" value="1"/>
</dbReference>
<dbReference type="SUPFAM" id="SSF47917">
    <property type="entry name" value="C-terminal domain of alpha and beta subunits of F1 ATP synthase"/>
    <property type="match status" value="1"/>
</dbReference>
<dbReference type="SUPFAM" id="SSF50615">
    <property type="entry name" value="N-terminal domain of alpha and beta subunits of F1 ATP synthase"/>
    <property type="match status" value="1"/>
</dbReference>
<dbReference type="SUPFAM" id="SSF52540">
    <property type="entry name" value="P-loop containing nucleoside triphosphate hydrolases"/>
    <property type="match status" value="1"/>
</dbReference>
<dbReference type="PROSITE" id="PS00152">
    <property type="entry name" value="ATPASE_ALPHA_BETA"/>
    <property type="match status" value="1"/>
</dbReference>
<reference key="1">
    <citation type="journal article" date="2009" name="J. Bacteriol.">
        <title>Genome sequence of the probiotic bacterium Bifidobacterium animalis subsp. lactis AD011.</title>
        <authorList>
            <person name="Kim J.F."/>
            <person name="Jeong H."/>
            <person name="Yu D.S."/>
            <person name="Choi S.-H."/>
            <person name="Hur C.-G."/>
            <person name="Park M.-S."/>
            <person name="Yoon S.H."/>
            <person name="Kim D.-W."/>
            <person name="Ji G.E."/>
            <person name="Park H.-S."/>
            <person name="Oh T.K."/>
        </authorList>
    </citation>
    <scope>NUCLEOTIDE SEQUENCE [LARGE SCALE GENOMIC DNA]</scope>
    <source>
        <strain>AD011</strain>
    </source>
</reference>
<protein>
    <recommendedName>
        <fullName evidence="1">ATP synthase subunit beta</fullName>
        <ecNumber evidence="1">7.1.2.2</ecNumber>
    </recommendedName>
    <alternativeName>
        <fullName evidence="1">ATP synthase F1 sector subunit beta</fullName>
    </alternativeName>
    <alternativeName>
        <fullName evidence="1">F-ATPase subunit beta</fullName>
    </alternativeName>
</protein>
<proteinExistence type="inferred from homology"/>
<feature type="chain" id="PRO_1000166572" description="ATP synthase subunit beta">
    <location>
        <begin position="1"/>
        <end position="495"/>
    </location>
</feature>
<feature type="binding site" evidence="1">
    <location>
        <begin position="178"/>
        <end position="185"/>
    </location>
    <ligand>
        <name>ATP</name>
        <dbReference type="ChEBI" id="CHEBI:30616"/>
    </ligand>
</feature>
<sequence>MAENQANAAADEAAEPIVGHVTRIQGSVIDVEFPVGHMPDIYNALTVEIKQMGQQEEGEVKDSVITLEVEQHLGDSTARCVALKSTDGLVRGAIVHDTGGPIEVPVGDVTKGHVFDVSGHILNKKPGEKIVIKERWPIHRNPPAFDQLESKTQMFETGIKVIDLLTPYVQGGKIGLFGGAGVGKTVLIQEMIQRVAQNHGGVSVFAGVGERTREGNDLIGEMDEAGVLEKTALVFGQMDEQPGTRLRVPLTALTMAEYFRDVQNQDVLLFIDNIFRFTQAGSEVSTLLGRMPSAVGYQPNLADEMGSLQERITSTRGHSITSLQAIYVPADDYTDPAPATTFAHLDATTELSRDIASRGIYPAVDPLASTSRILDPRYVGQAHYDCANRVKAILQRNKELQDIIALIGIDELGEEDKTTVNRARKIEQFLGQNFYVAEKFTGVPGSYVPAEETIEAFTRICDGVYDNVPEQAFSGIGGIEDLEKKWHKMQKEYGD</sequence>
<keyword id="KW-0066">ATP synthesis</keyword>
<keyword id="KW-0067">ATP-binding</keyword>
<keyword id="KW-1003">Cell membrane</keyword>
<keyword id="KW-0139">CF(1)</keyword>
<keyword id="KW-0375">Hydrogen ion transport</keyword>
<keyword id="KW-0406">Ion transport</keyword>
<keyword id="KW-0472">Membrane</keyword>
<keyword id="KW-0547">Nucleotide-binding</keyword>
<keyword id="KW-1185">Reference proteome</keyword>
<keyword id="KW-1278">Translocase</keyword>
<keyword id="KW-0813">Transport</keyword>
<comment type="function">
    <text evidence="1">Produces ATP from ADP in the presence of a proton gradient across the membrane. The catalytic sites are hosted primarily by the beta subunits.</text>
</comment>
<comment type="catalytic activity">
    <reaction evidence="1">
        <text>ATP + H2O + 4 H(+)(in) = ADP + phosphate + 5 H(+)(out)</text>
        <dbReference type="Rhea" id="RHEA:57720"/>
        <dbReference type="ChEBI" id="CHEBI:15377"/>
        <dbReference type="ChEBI" id="CHEBI:15378"/>
        <dbReference type="ChEBI" id="CHEBI:30616"/>
        <dbReference type="ChEBI" id="CHEBI:43474"/>
        <dbReference type="ChEBI" id="CHEBI:456216"/>
        <dbReference type="EC" id="7.1.2.2"/>
    </reaction>
</comment>
<comment type="subunit">
    <text evidence="1">F-type ATPases have 2 components, CF(1) - the catalytic core - and CF(0) - the membrane proton channel. CF(1) has five subunits: alpha(3), beta(3), gamma(1), delta(1), epsilon(1). CF(0) has three main subunits: a(1), b(2) and c(9-12). The alpha and beta chains form an alternating ring which encloses part of the gamma chain. CF(1) is attached to CF(0) by a central stalk formed by the gamma and epsilon chains, while a peripheral stalk is formed by the delta and b chains.</text>
</comment>
<comment type="subcellular location">
    <subcellularLocation>
        <location evidence="1">Cell membrane</location>
        <topology evidence="1">Peripheral membrane protein</topology>
    </subcellularLocation>
</comment>
<comment type="similarity">
    <text evidence="1">Belongs to the ATPase alpha/beta chains family.</text>
</comment>
<organism>
    <name type="scientific">Bifidobacterium animalis subsp. lactis (strain AD011)</name>
    <dbReference type="NCBI Taxonomy" id="442563"/>
    <lineage>
        <taxon>Bacteria</taxon>
        <taxon>Bacillati</taxon>
        <taxon>Actinomycetota</taxon>
        <taxon>Actinomycetes</taxon>
        <taxon>Bifidobacteriales</taxon>
        <taxon>Bifidobacteriaceae</taxon>
        <taxon>Bifidobacterium</taxon>
    </lineage>
</organism>
<evidence type="ECO:0000255" key="1">
    <source>
        <dbReference type="HAMAP-Rule" id="MF_01347"/>
    </source>
</evidence>
<gene>
    <name evidence="1" type="primary">atpD</name>
    <name type="ordered locus">BLA_0630</name>
</gene>